<evidence type="ECO:0000255" key="1">
    <source>
        <dbReference type="HAMAP-Rule" id="MF_00042"/>
    </source>
</evidence>
<evidence type="ECO:0000255" key="2">
    <source>
        <dbReference type="PROSITE-ProRule" id="PRU00408"/>
    </source>
</evidence>
<keyword id="KW-0963">Cytoplasm</keyword>
<keyword id="KW-0255">Endonuclease</keyword>
<keyword id="KW-0378">Hydrolase</keyword>
<keyword id="KW-0460">Magnesium</keyword>
<keyword id="KW-0479">Metal-binding</keyword>
<keyword id="KW-0540">Nuclease</keyword>
<dbReference type="EC" id="3.1.26.4" evidence="1"/>
<dbReference type="EMBL" id="AE017197">
    <property type="protein sequence ID" value="AAU04172.1"/>
    <property type="molecule type" value="Genomic_DNA"/>
</dbReference>
<dbReference type="RefSeq" id="WP_011191148.1">
    <property type="nucleotide sequence ID" value="NC_006142.1"/>
</dbReference>
<dbReference type="SMR" id="Q68W20"/>
<dbReference type="KEGG" id="rty:RT0713"/>
<dbReference type="eggNOG" id="COG0328">
    <property type="taxonomic scope" value="Bacteria"/>
</dbReference>
<dbReference type="HOGENOM" id="CLU_030894_6_0_5"/>
<dbReference type="OrthoDB" id="7845843at2"/>
<dbReference type="Proteomes" id="UP000000604">
    <property type="component" value="Chromosome"/>
</dbReference>
<dbReference type="GO" id="GO:0005737">
    <property type="term" value="C:cytoplasm"/>
    <property type="evidence" value="ECO:0007669"/>
    <property type="project" value="UniProtKB-SubCell"/>
</dbReference>
<dbReference type="GO" id="GO:0000287">
    <property type="term" value="F:magnesium ion binding"/>
    <property type="evidence" value="ECO:0007669"/>
    <property type="project" value="UniProtKB-UniRule"/>
</dbReference>
<dbReference type="GO" id="GO:0003676">
    <property type="term" value="F:nucleic acid binding"/>
    <property type="evidence" value="ECO:0007669"/>
    <property type="project" value="InterPro"/>
</dbReference>
<dbReference type="GO" id="GO:0004523">
    <property type="term" value="F:RNA-DNA hybrid ribonuclease activity"/>
    <property type="evidence" value="ECO:0007669"/>
    <property type="project" value="UniProtKB-UniRule"/>
</dbReference>
<dbReference type="GO" id="GO:0043137">
    <property type="term" value="P:DNA replication, removal of RNA primer"/>
    <property type="evidence" value="ECO:0007669"/>
    <property type="project" value="TreeGrafter"/>
</dbReference>
<dbReference type="CDD" id="cd09278">
    <property type="entry name" value="RNase_HI_prokaryote_like"/>
    <property type="match status" value="1"/>
</dbReference>
<dbReference type="FunFam" id="3.30.420.10:FF:000089">
    <property type="entry name" value="Ribonuclease H"/>
    <property type="match status" value="1"/>
</dbReference>
<dbReference type="Gene3D" id="3.30.420.10">
    <property type="entry name" value="Ribonuclease H-like superfamily/Ribonuclease H"/>
    <property type="match status" value="1"/>
</dbReference>
<dbReference type="HAMAP" id="MF_00042">
    <property type="entry name" value="RNase_H"/>
    <property type="match status" value="1"/>
</dbReference>
<dbReference type="InterPro" id="IPR050092">
    <property type="entry name" value="RNase_H"/>
</dbReference>
<dbReference type="InterPro" id="IPR012337">
    <property type="entry name" value="RNaseH-like_sf"/>
</dbReference>
<dbReference type="InterPro" id="IPR002156">
    <property type="entry name" value="RNaseH_domain"/>
</dbReference>
<dbReference type="InterPro" id="IPR036397">
    <property type="entry name" value="RNaseH_sf"/>
</dbReference>
<dbReference type="InterPro" id="IPR022892">
    <property type="entry name" value="RNaseHI"/>
</dbReference>
<dbReference type="NCBIfam" id="NF001236">
    <property type="entry name" value="PRK00203.1"/>
    <property type="match status" value="1"/>
</dbReference>
<dbReference type="PANTHER" id="PTHR10642">
    <property type="entry name" value="RIBONUCLEASE H1"/>
    <property type="match status" value="1"/>
</dbReference>
<dbReference type="PANTHER" id="PTHR10642:SF26">
    <property type="entry name" value="RIBONUCLEASE H1"/>
    <property type="match status" value="1"/>
</dbReference>
<dbReference type="Pfam" id="PF00075">
    <property type="entry name" value="RNase_H"/>
    <property type="match status" value="1"/>
</dbReference>
<dbReference type="SUPFAM" id="SSF53098">
    <property type="entry name" value="Ribonuclease H-like"/>
    <property type="match status" value="1"/>
</dbReference>
<dbReference type="PROSITE" id="PS50879">
    <property type="entry name" value="RNASE_H_1"/>
    <property type="match status" value="1"/>
</dbReference>
<name>RNH_RICTY</name>
<organism>
    <name type="scientific">Rickettsia typhi (strain ATCC VR-144 / Wilmington)</name>
    <dbReference type="NCBI Taxonomy" id="257363"/>
    <lineage>
        <taxon>Bacteria</taxon>
        <taxon>Pseudomonadati</taxon>
        <taxon>Pseudomonadota</taxon>
        <taxon>Alphaproteobacteria</taxon>
        <taxon>Rickettsiales</taxon>
        <taxon>Rickettsiaceae</taxon>
        <taxon>Rickettsieae</taxon>
        <taxon>Rickettsia</taxon>
        <taxon>typhus group</taxon>
    </lineage>
</organism>
<comment type="function">
    <text evidence="1">Endonuclease that specifically degrades the RNA of RNA-DNA hybrids.</text>
</comment>
<comment type="catalytic activity">
    <reaction evidence="1">
        <text>Endonucleolytic cleavage to 5'-phosphomonoester.</text>
        <dbReference type="EC" id="3.1.26.4"/>
    </reaction>
</comment>
<comment type="cofactor">
    <cofactor evidence="1">
        <name>Mg(2+)</name>
        <dbReference type="ChEBI" id="CHEBI:18420"/>
    </cofactor>
    <text evidence="1">Binds 1 Mg(2+) ion per subunit. May bind a second metal ion at a regulatory site, or after substrate binding.</text>
</comment>
<comment type="subunit">
    <text evidence="1">Monomer.</text>
</comment>
<comment type="subcellular location">
    <subcellularLocation>
        <location evidence="1">Cytoplasm</location>
    </subcellularLocation>
</comment>
<comment type="similarity">
    <text evidence="1">Belongs to the RNase H family.</text>
</comment>
<protein>
    <recommendedName>
        <fullName evidence="1">Ribonuclease H</fullName>
        <shortName evidence="1">RNase H</shortName>
        <ecNumber evidence="1">3.1.26.4</ecNumber>
    </recommendedName>
</protein>
<feature type="chain" id="PRO_0000195399" description="Ribonuclease H">
    <location>
        <begin position="1"/>
        <end position="152"/>
    </location>
</feature>
<feature type="domain" description="RNase H type-1" evidence="2">
    <location>
        <begin position="1"/>
        <end position="142"/>
    </location>
</feature>
<feature type="binding site" evidence="1">
    <location>
        <position position="10"/>
    </location>
    <ligand>
        <name>Mg(2+)</name>
        <dbReference type="ChEBI" id="CHEBI:18420"/>
        <label>1</label>
    </ligand>
</feature>
<feature type="binding site" evidence="1">
    <location>
        <position position="10"/>
    </location>
    <ligand>
        <name>Mg(2+)</name>
        <dbReference type="ChEBI" id="CHEBI:18420"/>
        <label>2</label>
    </ligand>
</feature>
<feature type="binding site" evidence="1">
    <location>
        <position position="48"/>
    </location>
    <ligand>
        <name>Mg(2+)</name>
        <dbReference type="ChEBI" id="CHEBI:18420"/>
        <label>1</label>
    </ligand>
</feature>
<feature type="binding site" evidence="1">
    <location>
        <position position="70"/>
    </location>
    <ligand>
        <name>Mg(2+)</name>
        <dbReference type="ChEBI" id="CHEBI:18420"/>
        <label>1</label>
    </ligand>
</feature>
<feature type="binding site" evidence="1">
    <location>
        <position position="134"/>
    </location>
    <ligand>
        <name>Mg(2+)</name>
        <dbReference type="ChEBI" id="CHEBI:18420"/>
        <label>2</label>
    </ligand>
</feature>
<reference key="1">
    <citation type="journal article" date="2004" name="J. Bacteriol.">
        <title>Complete genome sequence of Rickettsia typhi and comparison with sequences of other Rickettsiae.</title>
        <authorList>
            <person name="McLeod M.P."/>
            <person name="Qin X."/>
            <person name="Karpathy S.E."/>
            <person name="Gioia J."/>
            <person name="Highlander S.K."/>
            <person name="Fox G.E."/>
            <person name="McNeill T.Z."/>
            <person name="Jiang H."/>
            <person name="Muzny D."/>
            <person name="Jacob L.S."/>
            <person name="Hawes A.C."/>
            <person name="Sodergren E."/>
            <person name="Gill R."/>
            <person name="Hume J."/>
            <person name="Morgan M."/>
            <person name="Fan G."/>
            <person name="Amin A.G."/>
            <person name="Gibbs R.A."/>
            <person name="Hong C."/>
            <person name="Yu X.-J."/>
            <person name="Walker D.H."/>
            <person name="Weinstock G.M."/>
        </authorList>
    </citation>
    <scope>NUCLEOTIDE SEQUENCE [LARGE SCALE GENOMIC DNA]</scope>
    <source>
        <strain>ATCC VR-144 / Wilmington</strain>
    </source>
</reference>
<gene>
    <name evidence="1" type="primary">rnhA</name>
    <name type="ordered locus">RT0713</name>
</gene>
<accession>Q68W20</accession>
<proteinExistence type="inferred from homology"/>
<sequence>MDSKVVIYTDGACSGNPGPGGWGALLKFNDASKKIFGYELVTTNNRMEMTAALEALRVLKKSSIVEIYTDSKYLQHGITVWIHNWMKNNWCKNNNEPVKNVDLWQKLYSELSKHTIMWRWVKGHASNSGNIAADKLAVQGRETAMEILKCRG</sequence>